<dbReference type="EMBL" id="AJ132286">
    <property type="protein sequence ID" value="CAB45262.1"/>
    <property type="molecule type" value="Genomic_DNA"/>
</dbReference>
<dbReference type="EMBL" id="AE000512">
    <property type="protein sequence ID" value="AAD35458.1"/>
    <property type="molecule type" value="Genomic_DNA"/>
</dbReference>
<dbReference type="PIR" id="A72385">
    <property type="entry name" value="A72385"/>
</dbReference>
<dbReference type="RefSeq" id="NP_228182.1">
    <property type="nucleotide sequence ID" value="NC_000853.1"/>
</dbReference>
<dbReference type="RefSeq" id="WP_004083185.1">
    <property type="nucleotide sequence ID" value="NZ_CP011107.1"/>
</dbReference>
<dbReference type="SMR" id="Q9WW19"/>
<dbReference type="FunCoup" id="Q9WW19">
    <property type="interactions" value="38"/>
</dbReference>
<dbReference type="STRING" id="243274.TM_0371"/>
<dbReference type="PaxDb" id="243274-THEMA_02860"/>
<dbReference type="EnsemblBacteria" id="AAD35458">
    <property type="protein sequence ID" value="AAD35458"/>
    <property type="gene ID" value="TM_0371"/>
</dbReference>
<dbReference type="KEGG" id="tma:TM0371"/>
<dbReference type="KEGG" id="tmi:THEMA_02860"/>
<dbReference type="KEGG" id="tmm:Tmari_0369"/>
<dbReference type="KEGG" id="tmw:THMA_0379"/>
<dbReference type="eggNOG" id="COG1438">
    <property type="taxonomic scope" value="Bacteria"/>
</dbReference>
<dbReference type="InParanoid" id="Q9WW19"/>
<dbReference type="OrthoDB" id="9807089at2"/>
<dbReference type="UniPathway" id="UPA00068"/>
<dbReference type="Proteomes" id="UP000008183">
    <property type="component" value="Chromosome"/>
</dbReference>
<dbReference type="GO" id="GO:0005737">
    <property type="term" value="C:cytoplasm"/>
    <property type="evidence" value="ECO:0007669"/>
    <property type="project" value="UniProtKB-SubCell"/>
</dbReference>
<dbReference type="GO" id="GO:0005667">
    <property type="term" value="C:transcription regulator complex"/>
    <property type="evidence" value="ECO:0000318"/>
    <property type="project" value="GO_Central"/>
</dbReference>
<dbReference type="GO" id="GO:0034618">
    <property type="term" value="F:arginine binding"/>
    <property type="evidence" value="ECO:0007669"/>
    <property type="project" value="InterPro"/>
</dbReference>
<dbReference type="GO" id="GO:0000987">
    <property type="term" value="F:cis-regulatory region sequence-specific DNA binding"/>
    <property type="evidence" value="ECO:0000318"/>
    <property type="project" value="GO_Central"/>
</dbReference>
<dbReference type="GO" id="GO:0003700">
    <property type="term" value="F:DNA-binding transcription factor activity"/>
    <property type="evidence" value="ECO:0007669"/>
    <property type="project" value="UniProtKB-UniRule"/>
</dbReference>
<dbReference type="GO" id="GO:0006526">
    <property type="term" value="P:L-arginine biosynthetic process"/>
    <property type="evidence" value="ECO:0007669"/>
    <property type="project" value="UniProtKB-UniPathway"/>
</dbReference>
<dbReference type="GO" id="GO:0051259">
    <property type="term" value="P:protein complex oligomerization"/>
    <property type="evidence" value="ECO:0007669"/>
    <property type="project" value="InterPro"/>
</dbReference>
<dbReference type="GO" id="GO:1900079">
    <property type="term" value="P:regulation of arginine biosynthetic process"/>
    <property type="evidence" value="ECO:0007669"/>
    <property type="project" value="UniProtKB-UniRule"/>
</dbReference>
<dbReference type="GO" id="GO:0000821">
    <property type="term" value="P:regulation of arginine metabolic process"/>
    <property type="evidence" value="ECO:0000318"/>
    <property type="project" value="GO_Central"/>
</dbReference>
<dbReference type="Gene3D" id="3.30.1360.40">
    <property type="match status" value="1"/>
</dbReference>
<dbReference type="Gene3D" id="1.10.10.10">
    <property type="entry name" value="Winged helix-like DNA-binding domain superfamily/Winged helix DNA-binding domain"/>
    <property type="match status" value="1"/>
</dbReference>
<dbReference type="HAMAP" id="MF_00173">
    <property type="entry name" value="Arg_repressor"/>
    <property type="match status" value="1"/>
</dbReference>
<dbReference type="InterPro" id="IPR001669">
    <property type="entry name" value="Arg_repress"/>
</dbReference>
<dbReference type="InterPro" id="IPR020899">
    <property type="entry name" value="Arg_repress_C"/>
</dbReference>
<dbReference type="InterPro" id="IPR036251">
    <property type="entry name" value="Arg_repress_C_sf"/>
</dbReference>
<dbReference type="InterPro" id="IPR020900">
    <property type="entry name" value="Arg_repress_DNA-bd"/>
</dbReference>
<dbReference type="InterPro" id="IPR036388">
    <property type="entry name" value="WH-like_DNA-bd_sf"/>
</dbReference>
<dbReference type="InterPro" id="IPR036390">
    <property type="entry name" value="WH_DNA-bd_sf"/>
</dbReference>
<dbReference type="NCBIfam" id="TIGR01529">
    <property type="entry name" value="argR_whole"/>
    <property type="match status" value="1"/>
</dbReference>
<dbReference type="PANTHER" id="PTHR34471">
    <property type="entry name" value="ARGININE REPRESSOR"/>
    <property type="match status" value="1"/>
</dbReference>
<dbReference type="PANTHER" id="PTHR34471:SF1">
    <property type="entry name" value="ARGININE REPRESSOR"/>
    <property type="match status" value="1"/>
</dbReference>
<dbReference type="Pfam" id="PF01316">
    <property type="entry name" value="Arg_repressor"/>
    <property type="match status" value="1"/>
</dbReference>
<dbReference type="Pfam" id="PF02863">
    <property type="entry name" value="Arg_repressor_C"/>
    <property type="match status" value="1"/>
</dbReference>
<dbReference type="PRINTS" id="PR01467">
    <property type="entry name" value="ARGREPRESSOR"/>
</dbReference>
<dbReference type="SUPFAM" id="SSF55252">
    <property type="entry name" value="C-terminal domain of arginine repressor"/>
    <property type="match status" value="1"/>
</dbReference>
<dbReference type="SUPFAM" id="SSF46785">
    <property type="entry name" value="Winged helix' DNA-binding domain"/>
    <property type="match status" value="1"/>
</dbReference>
<name>ARGR_THEMA</name>
<sequence length="152" mass="17222">MKISKKRRQELIRKIIHEKKISNQFQIVEELKKYGIKAVQPTVARDLKEIGAVKIMDESGNYVYKLLDETPVIDPWKELKRNFKSFVESIDRAGNLIVIKTIPGTASGIARVIDRLDIDEIVGTLAGDDTIFVAVRDPESCEKIVEKLSSIL</sequence>
<gene>
    <name type="primary">argR</name>
    <name type="ordered locus">TM_0371</name>
</gene>
<feature type="chain" id="PRO_0000205136" description="Arginine repressor">
    <location>
        <begin position="1"/>
        <end position="152"/>
    </location>
</feature>
<keyword id="KW-0028">Amino-acid biosynthesis</keyword>
<keyword id="KW-0055">Arginine biosynthesis</keyword>
<keyword id="KW-0963">Cytoplasm</keyword>
<keyword id="KW-0238">DNA-binding</keyword>
<keyword id="KW-1185">Reference proteome</keyword>
<keyword id="KW-0678">Repressor</keyword>
<keyword id="KW-0804">Transcription</keyword>
<keyword id="KW-0805">Transcription regulation</keyword>
<proteinExistence type="inferred from homology"/>
<comment type="function">
    <text evidence="1">Regulates arginine biosynthesis genes.</text>
</comment>
<comment type="pathway">
    <text>Amino-acid biosynthesis; L-arginine biosynthesis [regulation].</text>
</comment>
<comment type="subcellular location">
    <subcellularLocation>
        <location evidence="1">Cytoplasm</location>
    </subcellularLocation>
</comment>
<comment type="similarity">
    <text evidence="2">Belongs to the ArgR family.</text>
</comment>
<accession>Q9WW19</accession>
<reference key="1">
    <citation type="journal article" date="2000" name="Mol. Gen. Genet.">
        <title>Thermostability, oligomerization and DNA-binding properties of the regulatory protein ArgR from the hyperthermophilic bacterium Thermotoga neapolitana.</title>
        <authorList>
            <person name="Dimova D."/>
            <person name="Weigel P."/>
            <person name="Takahashi M."/>
            <person name="Marc F."/>
            <person name="Van Duyne G.D."/>
            <person name="Sakanyan V."/>
        </authorList>
    </citation>
    <scope>NUCLEOTIDE SEQUENCE [GENOMIC DNA]</scope>
    <source>
        <strain>ATCC 43589 / DSM 3109 / JCM 10099 / NBRC 100826 / MSB8</strain>
    </source>
</reference>
<reference key="2">
    <citation type="journal article" date="1999" name="Nature">
        <title>Evidence for lateral gene transfer between Archaea and Bacteria from genome sequence of Thermotoga maritima.</title>
        <authorList>
            <person name="Nelson K.E."/>
            <person name="Clayton R.A."/>
            <person name="Gill S.R."/>
            <person name="Gwinn M.L."/>
            <person name="Dodson R.J."/>
            <person name="Haft D.H."/>
            <person name="Hickey E.K."/>
            <person name="Peterson J.D."/>
            <person name="Nelson W.C."/>
            <person name="Ketchum K.A."/>
            <person name="McDonald L.A."/>
            <person name="Utterback T.R."/>
            <person name="Malek J.A."/>
            <person name="Linher K.D."/>
            <person name="Garrett M.M."/>
            <person name="Stewart A.M."/>
            <person name="Cotton M.D."/>
            <person name="Pratt M.S."/>
            <person name="Phillips C.A."/>
            <person name="Richardson D.L."/>
            <person name="Heidelberg J.F."/>
            <person name="Sutton G.G."/>
            <person name="Fleischmann R.D."/>
            <person name="Eisen J.A."/>
            <person name="White O."/>
            <person name="Salzberg S.L."/>
            <person name="Smith H.O."/>
            <person name="Venter J.C."/>
            <person name="Fraser C.M."/>
        </authorList>
    </citation>
    <scope>NUCLEOTIDE SEQUENCE [LARGE SCALE GENOMIC DNA]</scope>
    <source>
        <strain>ATCC 43589 / DSM 3109 / JCM 10099 / NBRC 100826 / MSB8</strain>
    </source>
</reference>
<protein>
    <recommendedName>
        <fullName>Arginine repressor</fullName>
    </recommendedName>
</protein>
<organism>
    <name type="scientific">Thermotoga maritima (strain ATCC 43589 / DSM 3109 / JCM 10099 / NBRC 100826 / MSB8)</name>
    <dbReference type="NCBI Taxonomy" id="243274"/>
    <lineage>
        <taxon>Bacteria</taxon>
        <taxon>Thermotogati</taxon>
        <taxon>Thermotogota</taxon>
        <taxon>Thermotogae</taxon>
        <taxon>Thermotogales</taxon>
        <taxon>Thermotogaceae</taxon>
        <taxon>Thermotoga</taxon>
    </lineage>
</organism>
<evidence type="ECO:0000250" key="1"/>
<evidence type="ECO:0000305" key="2"/>